<sequence>MANLRIIKRRIRSVRNIAKITRAMEMIAASKMKKAQERGLAGRPYSEKITEVIAALAALPQSGEILHPLLERRPVKKIAILHITPDRGQCGGLVANINRKTGTFIMEQKVPVSAVVVGRKGVDFIRRIRQQMRAEFINLGDKPDYLDTLPISRVIMDDFMSGEIDQVFIAYTQFVSTAIQNPVLEQLLPVMPVELPPGQNLEYIYEPESATVLNSLLPRFVEMSVYHAILESIASEQSARMVAMRNATDNAKELIGELTLVYNKARQESITNELLDIVGGAAALA</sequence>
<accession>Q3ZZT8</accession>
<dbReference type="EMBL" id="AJ965256">
    <property type="protein sequence ID" value="CAI82725.1"/>
    <property type="molecule type" value="Genomic_DNA"/>
</dbReference>
<dbReference type="RefSeq" id="WP_011309077.1">
    <property type="nucleotide sequence ID" value="NC_007356.1"/>
</dbReference>
<dbReference type="SMR" id="Q3ZZT8"/>
<dbReference type="KEGG" id="deh:cbdbA537"/>
<dbReference type="HOGENOM" id="CLU_050669_0_1_0"/>
<dbReference type="Proteomes" id="UP000000433">
    <property type="component" value="Chromosome"/>
</dbReference>
<dbReference type="GO" id="GO:0005886">
    <property type="term" value="C:plasma membrane"/>
    <property type="evidence" value="ECO:0007669"/>
    <property type="project" value="UniProtKB-SubCell"/>
</dbReference>
<dbReference type="GO" id="GO:0045259">
    <property type="term" value="C:proton-transporting ATP synthase complex"/>
    <property type="evidence" value="ECO:0007669"/>
    <property type="project" value="UniProtKB-KW"/>
</dbReference>
<dbReference type="GO" id="GO:0005524">
    <property type="term" value="F:ATP binding"/>
    <property type="evidence" value="ECO:0007669"/>
    <property type="project" value="UniProtKB-UniRule"/>
</dbReference>
<dbReference type="GO" id="GO:0046933">
    <property type="term" value="F:proton-transporting ATP synthase activity, rotational mechanism"/>
    <property type="evidence" value="ECO:0007669"/>
    <property type="project" value="UniProtKB-UniRule"/>
</dbReference>
<dbReference type="GO" id="GO:0042777">
    <property type="term" value="P:proton motive force-driven plasma membrane ATP synthesis"/>
    <property type="evidence" value="ECO:0007669"/>
    <property type="project" value="UniProtKB-UniRule"/>
</dbReference>
<dbReference type="CDD" id="cd12151">
    <property type="entry name" value="F1-ATPase_gamma"/>
    <property type="match status" value="1"/>
</dbReference>
<dbReference type="Gene3D" id="3.40.1380.10">
    <property type="match status" value="1"/>
</dbReference>
<dbReference type="Gene3D" id="1.10.287.80">
    <property type="entry name" value="ATP synthase, gamma subunit, helix hairpin domain"/>
    <property type="match status" value="2"/>
</dbReference>
<dbReference type="HAMAP" id="MF_00815">
    <property type="entry name" value="ATP_synth_gamma_bact"/>
    <property type="match status" value="1"/>
</dbReference>
<dbReference type="InterPro" id="IPR035968">
    <property type="entry name" value="ATP_synth_F1_ATPase_gsu"/>
</dbReference>
<dbReference type="InterPro" id="IPR000131">
    <property type="entry name" value="ATP_synth_F1_gsu"/>
</dbReference>
<dbReference type="InterPro" id="IPR023632">
    <property type="entry name" value="ATP_synth_F1_gsu_CS"/>
</dbReference>
<dbReference type="NCBIfam" id="TIGR01146">
    <property type="entry name" value="ATPsyn_F1gamma"/>
    <property type="match status" value="1"/>
</dbReference>
<dbReference type="PANTHER" id="PTHR11693">
    <property type="entry name" value="ATP SYNTHASE GAMMA CHAIN"/>
    <property type="match status" value="1"/>
</dbReference>
<dbReference type="PANTHER" id="PTHR11693:SF22">
    <property type="entry name" value="ATP SYNTHASE SUBUNIT GAMMA, MITOCHONDRIAL"/>
    <property type="match status" value="1"/>
</dbReference>
<dbReference type="Pfam" id="PF00231">
    <property type="entry name" value="ATP-synt"/>
    <property type="match status" value="1"/>
</dbReference>
<dbReference type="PRINTS" id="PR00126">
    <property type="entry name" value="ATPASEGAMMA"/>
</dbReference>
<dbReference type="SUPFAM" id="SSF52943">
    <property type="entry name" value="ATP synthase (F1-ATPase), gamma subunit"/>
    <property type="match status" value="1"/>
</dbReference>
<dbReference type="PROSITE" id="PS00153">
    <property type="entry name" value="ATPASE_GAMMA"/>
    <property type="match status" value="1"/>
</dbReference>
<evidence type="ECO:0000255" key="1">
    <source>
        <dbReference type="HAMAP-Rule" id="MF_00815"/>
    </source>
</evidence>
<comment type="function">
    <text evidence="1">Produces ATP from ADP in the presence of a proton gradient across the membrane. The gamma chain is believed to be important in regulating ATPase activity and the flow of protons through the CF(0) complex.</text>
</comment>
<comment type="subunit">
    <text evidence="1">F-type ATPases have 2 components, CF(1) - the catalytic core - and CF(0) - the membrane proton channel. CF(1) has five subunits: alpha(3), beta(3), gamma(1), delta(1), epsilon(1). CF(0) has three main subunits: a, b and c.</text>
</comment>
<comment type="subcellular location">
    <subcellularLocation>
        <location evidence="1">Cell membrane</location>
        <topology evidence="1">Peripheral membrane protein</topology>
    </subcellularLocation>
</comment>
<comment type="similarity">
    <text evidence="1">Belongs to the ATPase gamma chain family.</text>
</comment>
<protein>
    <recommendedName>
        <fullName evidence="1">ATP synthase gamma chain</fullName>
    </recommendedName>
    <alternativeName>
        <fullName evidence="1">ATP synthase F1 sector gamma subunit</fullName>
    </alternativeName>
    <alternativeName>
        <fullName evidence="1">F-ATPase gamma subunit</fullName>
    </alternativeName>
</protein>
<name>ATPG_DEHMC</name>
<organism>
    <name type="scientific">Dehalococcoides mccartyi (strain CBDB1)</name>
    <dbReference type="NCBI Taxonomy" id="255470"/>
    <lineage>
        <taxon>Bacteria</taxon>
        <taxon>Bacillati</taxon>
        <taxon>Chloroflexota</taxon>
        <taxon>Dehalococcoidia</taxon>
        <taxon>Dehalococcoidales</taxon>
        <taxon>Dehalococcoidaceae</taxon>
        <taxon>Dehalococcoides</taxon>
    </lineage>
</organism>
<feature type="chain" id="PRO_1000053201" description="ATP synthase gamma chain">
    <location>
        <begin position="1"/>
        <end position="285"/>
    </location>
</feature>
<proteinExistence type="inferred from homology"/>
<gene>
    <name evidence="1" type="primary">atpG</name>
    <name type="ordered locus">cbdbA537</name>
</gene>
<reference key="1">
    <citation type="journal article" date="2005" name="Nat. Biotechnol.">
        <title>Genome sequence of the chlorinated compound-respiring bacterium Dehalococcoides species strain CBDB1.</title>
        <authorList>
            <person name="Kube M."/>
            <person name="Beck A."/>
            <person name="Zinder S.H."/>
            <person name="Kuhl H."/>
            <person name="Reinhardt R."/>
            <person name="Adrian L."/>
        </authorList>
    </citation>
    <scope>NUCLEOTIDE SEQUENCE [LARGE SCALE GENOMIC DNA]</scope>
    <source>
        <strain>CBDB1</strain>
    </source>
</reference>
<keyword id="KW-0066">ATP synthesis</keyword>
<keyword id="KW-1003">Cell membrane</keyword>
<keyword id="KW-0139">CF(1)</keyword>
<keyword id="KW-0375">Hydrogen ion transport</keyword>
<keyword id="KW-0406">Ion transport</keyword>
<keyword id="KW-0472">Membrane</keyword>
<keyword id="KW-0813">Transport</keyword>